<protein>
    <recommendedName>
        <fullName evidence="1">tRNA pseudouridine synthase B</fullName>
        <ecNumber evidence="1">5.4.99.25</ecNumber>
    </recommendedName>
    <alternativeName>
        <fullName evidence="1">tRNA pseudouridine(55) synthase</fullName>
        <shortName evidence="1">Psi55 synthase</shortName>
    </alternativeName>
    <alternativeName>
        <fullName evidence="1">tRNA pseudouridylate synthase</fullName>
    </alternativeName>
    <alternativeName>
        <fullName evidence="1">tRNA-uridine isomerase</fullName>
    </alternativeName>
</protein>
<gene>
    <name evidence="1" type="primary">truB</name>
    <name type="ordered locus">MAV_3682</name>
</gene>
<proteinExistence type="inferred from homology"/>
<reference key="1">
    <citation type="submission" date="2006-10" db="EMBL/GenBank/DDBJ databases">
        <authorList>
            <person name="Fleischmann R.D."/>
            <person name="Dodson R.J."/>
            <person name="Haft D.H."/>
            <person name="Merkel J.S."/>
            <person name="Nelson W.C."/>
            <person name="Fraser C.M."/>
        </authorList>
    </citation>
    <scope>NUCLEOTIDE SEQUENCE [LARGE SCALE GENOMIC DNA]</scope>
    <source>
        <strain>104</strain>
    </source>
</reference>
<accession>A0QIX1</accession>
<organism>
    <name type="scientific">Mycobacterium avium (strain 104)</name>
    <dbReference type="NCBI Taxonomy" id="243243"/>
    <lineage>
        <taxon>Bacteria</taxon>
        <taxon>Bacillati</taxon>
        <taxon>Actinomycetota</taxon>
        <taxon>Actinomycetes</taxon>
        <taxon>Mycobacteriales</taxon>
        <taxon>Mycobacteriaceae</taxon>
        <taxon>Mycobacterium</taxon>
        <taxon>Mycobacterium avium complex (MAC)</taxon>
    </lineage>
</organism>
<keyword id="KW-0413">Isomerase</keyword>
<keyword id="KW-0819">tRNA processing</keyword>
<name>TRUB_MYCA1</name>
<feature type="chain" id="PRO_1000084626" description="tRNA pseudouridine synthase B">
    <location>
        <begin position="1"/>
        <end position="309"/>
    </location>
</feature>
<feature type="active site" description="Nucleophile" evidence="1">
    <location>
        <position position="40"/>
    </location>
</feature>
<evidence type="ECO:0000255" key="1">
    <source>
        <dbReference type="HAMAP-Rule" id="MF_01080"/>
    </source>
</evidence>
<sequence length="309" mass="32193">MSPPGLVVVDKPAGMTSHDVVGRCRRIFATRRVGHAGTLDPMATGVLVLGVERATKILGLLTAAAKSYSATIRLGQATSTDDAEGDVVRSVDARHLTSQAIEAAVGGLRGDIHQVPSTVSAIKVAGKRAYKLVREGQAVELPARPVRIDRFEVRDLRAAGECVDVDVEVDCSSGTYVRALARDLGAALGVGGHLTALRRTRVGRFGLEQAYGLDELAECPRLSYSLDEACLLIFGRRDLSADEAEAAGNGRALAAAAAGNGRALAAAGIDGVYAACAPDGRVIALLRDEGARTRSVVVIRPATMQDGTS</sequence>
<comment type="function">
    <text evidence="1">Responsible for synthesis of pseudouridine from uracil-55 in the psi GC loop of transfer RNAs.</text>
</comment>
<comment type="catalytic activity">
    <reaction evidence="1">
        <text>uridine(55) in tRNA = pseudouridine(55) in tRNA</text>
        <dbReference type="Rhea" id="RHEA:42532"/>
        <dbReference type="Rhea" id="RHEA-COMP:10101"/>
        <dbReference type="Rhea" id="RHEA-COMP:10102"/>
        <dbReference type="ChEBI" id="CHEBI:65314"/>
        <dbReference type="ChEBI" id="CHEBI:65315"/>
        <dbReference type="EC" id="5.4.99.25"/>
    </reaction>
</comment>
<comment type="similarity">
    <text evidence="1">Belongs to the pseudouridine synthase TruB family. Type 1 subfamily.</text>
</comment>
<dbReference type="EC" id="5.4.99.25" evidence="1"/>
<dbReference type="EMBL" id="CP000479">
    <property type="protein sequence ID" value="ABK66295.1"/>
    <property type="molecule type" value="Genomic_DNA"/>
</dbReference>
<dbReference type="RefSeq" id="WP_011725615.1">
    <property type="nucleotide sequence ID" value="NC_008595.1"/>
</dbReference>
<dbReference type="SMR" id="A0QIX1"/>
<dbReference type="KEGG" id="mav:MAV_3682"/>
<dbReference type="HOGENOM" id="CLU_032087_0_0_11"/>
<dbReference type="Proteomes" id="UP000001574">
    <property type="component" value="Chromosome"/>
</dbReference>
<dbReference type="GO" id="GO:0003723">
    <property type="term" value="F:RNA binding"/>
    <property type="evidence" value="ECO:0007669"/>
    <property type="project" value="InterPro"/>
</dbReference>
<dbReference type="GO" id="GO:0160148">
    <property type="term" value="F:tRNA pseudouridine(55) synthase activity"/>
    <property type="evidence" value="ECO:0007669"/>
    <property type="project" value="UniProtKB-EC"/>
</dbReference>
<dbReference type="GO" id="GO:1990481">
    <property type="term" value="P:mRNA pseudouridine synthesis"/>
    <property type="evidence" value="ECO:0007669"/>
    <property type="project" value="TreeGrafter"/>
</dbReference>
<dbReference type="GO" id="GO:0031119">
    <property type="term" value="P:tRNA pseudouridine synthesis"/>
    <property type="evidence" value="ECO:0007669"/>
    <property type="project" value="UniProtKB-UniRule"/>
</dbReference>
<dbReference type="CDD" id="cd02573">
    <property type="entry name" value="PseudoU_synth_EcTruB"/>
    <property type="match status" value="1"/>
</dbReference>
<dbReference type="FunFam" id="3.30.2350.10:FF:000011">
    <property type="entry name" value="tRNA pseudouridine synthase B"/>
    <property type="match status" value="1"/>
</dbReference>
<dbReference type="Gene3D" id="3.30.2350.10">
    <property type="entry name" value="Pseudouridine synthase"/>
    <property type="match status" value="1"/>
</dbReference>
<dbReference type="Gene3D" id="2.30.130.10">
    <property type="entry name" value="PUA domain"/>
    <property type="match status" value="1"/>
</dbReference>
<dbReference type="HAMAP" id="MF_01080">
    <property type="entry name" value="TruB_bact"/>
    <property type="match status" value="1"/>
</dbReference>
<dbReference type="InterPro" id="IPR020103">
    <property type="entry name" value="PsdUridine_synth_cat_dom_sf"/>
</dbReference>
<dbReference type="InterPro" id="IPR002501">
    <property type="entry name" value="PsdUridine_synth_N"/>
</dbReference>
<dbReference type="InterPro" id="IPR015947">
    <property type="entry name" value="PUA-like_sf"/>
</dbReference>
<dbReference type="InterPro" id="IPR036974">
    <property type="entry name" value="PUA_sf"/>
</dbReference>
<dbReference type="InterPro" id="IPR015225">
    <property type="entry name" value="tRNA_psdUridine_synth_fam2_C"/>
</dbReference>
<dbReference type="InterPro" id="IPR014780">
    <property type="entry name" value="tRNA_psdUridine_synth_TruB"/>
</dbReference>
<dbReference type="InterPro" id="IPR032819">
    <property type="entry name" value="TruB_C"/>
</dbReference>
<dbReference type="NCBIfam" id="TIGR00431">
    <property type="entry name" value="TruB"/>
    <property type="match status" value="1"/>
</dbReference>
<dbReference type="PANTHER" id="PTHR13767:SF2">
    <property type="entry name" value="PSEUDOURIDYLATE SYNTHASE TRUB1"/>
    <property type="match status" value="1"/>
</dbReference>
<dbReference type="PANTHER" id="PTHR13767">
    <property type="entry name" value="TRNA-PSEUDOURIDINE SYNTHASE"/>
    <property type="match status" value="1"/>
</dbReference>
<dbReference type="Pfam" id="PF09142">
    <property type="entry name" value="TruB_C"/>
    <property type="match status" value="1"/>
</dbReference>
<dbReference type="Pfam" id="PF16198">
    <property type="entry name" value="TruB_C_2"/>
    <property type="match status" value="1"/>
</dbReference>
<dbReference type="Pfam" id="PF01509">
    <property type="entry name" value="TruB_N"/>
    <property type="match status" value="1"/>
</dbReference>
<dbReference type="SUPFAM" id="SSF55120">
    <property type="entry name" value="Pseudouridine synthase"/>
    <property type="match status" value="1"/>
</dbReference>
<dbReference type="SUPFAM" id="SSF88697">
    <property type="entry name" value="PUA domain-like"/>
    <property type="match status" value="1"/>
</dbReference>